<protein>
    <recommendedName>
        <fullName evidence="1">Chaperonin GroEL</fullName>
        <ecNumber evidence="1">5.6.1.7</ecNumber>
    </recommendedName>
    <alternativeName>
        <fullName evidence="1">60 kDa chaperonin</fullName>
    </alternativeName>
    <alternativeName>
        <fullName evidence="1">Chaperonin-60</fullName>
        <shortName evidence="1">Cpn60</shortName>
    </alternativeName>
</protein>
<comment type="function">
    <text evidence="1">Together with its co-chaperonin GroES, plays an essential role in assisting protein folding. The GroEL-GroES system forms a nano-cage that allows encapsulation of the non-native substrate proteins and provides a physical environment optimized to promote and accelerate protein folding.</text>
</comment>
<comment type="catalytic activity">
    <reaction evidence="1">
        <text>ATP + H2O + a folded polypeptide = ADP + phosphate + an unfolded polypeptide.</text>
        <dbReference type="EC" id="5.6.1.7"/>
    </reaction>
</comment>
<comment type="subunit">
    <text evidence="1">Forms a cylinder of 14 subunits composed of two heptameric rings stacked back-to-back. Interacts with the co-chaperonin GroES.</text>
</comment>
<comment type="subcellular location">
    <subcellularLocation>
        <location evidence="1">Cytoplasm</location>
    </subcellularLocation>
</comment>
<comment type="similarity">
    <text evidence="1">Belongs to the chaperonin (HSP60) family.</text>
</comment>
<organism>
    <name type="scientific">Vibrio campbellii (strain ATCC BAA-1116)</name>
    <dbReference type="NCBI Taxonomy" id="2902295"/>
    <lineage>
        <taxon>Bacteria</taxon>
        <taxon>Pseudomonadati</taxon>
        <taxon>Pseudomonadota</taxon>
        <taxon>Gammaproteobacteria</taxon>
        <taxon>Vibrionales</taxon>
        <taxon>Vibrionaceae</taxon>
        <taxon>Vibrio</taxon>
    </lineage>
</organism>
<evidence type="ECO:0000255" key="1">
    <source>
        <dbReference type="HAMAP-Rule" id="MF_00600"/>
    </source>
</evidence>
<accession>A7MX54</accession>
<proteinExistence type="inferred from homology"/>
<dbReference type="EC" id="5.6.1.7" evidence="1"/>
<dbReference type="EMBL" id="CP000789">
    <property type="protein sequence ID" value="ABU69190.1"/>
    <property type="molecule type" value="Genomic_DNA"/>
</dbReference>
<dbReference type="RefSeq" id="WP_005425042.1">
    <property type="nucleotide sequence ID" value="NC_022269.1"/>
</dbReference>
<dbReference type="SMR" id="A7MX54"/>
<dbReference type="KEGG" id="vha:VIBHAR_00142"/>
<dbReference type="PATRIC" id="fig|338187.25.peg.2391"/>
<dbReference type="Proteomes" id="UP000008152">
    <property type="component" value="Chromosome I"/>
</dbReference>
<dbReference type="GO" id="GO:0005737">
    <property type="term" value="C:cytoplasm"/>
    <property type="evidence" value="ECO:0007669"/>
    <property type="project" value="UniProtKB-SubCell"/>
</dbReference>
<dbReference type="GO" id="GO:0005524">
    <property type="term" value="F:ATP binding"/>
    <property type="evidence" value="ECO:0007669"/>
    <property type="project" value="UniProtKB-UniRule"/>
</dbReference>
<dbReference type="GO" id="GO:0140662">
    <property type="term" value="F:ATP-dependent protein folding chaperone"/>
    <property type="evidence" value="ECO:0007669"/>
    <property type="project" value="InterPro"/>
</dbReference>
<dbReference type="GO" id="GO:0016853">
    <property type="term" value="F:isomerase activity"/>
    <property type="evidence" value="ECO:0007669"/>
    <property type="project" value="UniProtKB-KW"/>
</dbReference>
<dbReference type="GO" id="GO:0051082">
    <property type="term" value="F:unfolded protein binding"/>
    <property type="evidence" value="ECO:0007669"/>
    <property type="project" value="UniProtKB-UniRule"/>
</dbReference>
<dbReference type="GO" id="GO:0042026">
    <property type="term" value="P:protein refolding"/>
    <property type="evidence" value="ECO:0007669"/>
    <property type="project" value="UniProtKB-UniRule"/>
</dbReference>
<dbReference type="CDD" id="cd03344">
    <property type="entry name" value="GroEL"/>
    <property type="match status" value="1"/>
</dbReference>
<dbReference type="FunFam" id="1.10.560.10:FF:000001">
    <property type="entry name" value="60 kDa chaperonin"/>
    <property type="match status" value="1"/>
</dbReference>
<dbReference type="FunFam" id="3.50.7.10:FF:000001">
    <property type="entry name" value="60 kDa chaperonin"/>
    <property type="match status" value="1"/>
</dbReference>
<dbReference type="Gene3D" id="3.50.7.10">
    <property type="entry name" value="GroEL"/>
    <property type="match status" value="1"/>
</dbReference>
<dbReference type="Gene3D" id="1.10.560.10">
    <property type="entry name" value="GroEL-like equatorial domain"/>
    <property type="match status" value="1"/>
</dbReference>
<dbReference type="Gene3D" id="3.30.260.10">
    <property type="entry name" value="TCP-1-like chaperonin intermediate domain"/>
    <property type="match status" value="1"/>
</dbReference>
<dbReference type="HAMAP" id="MF_00600">
    <property type="entry name" value="CH60"/>
    <property type="match status" value="1"/>
</dbReference>
<dbReference type="InterPro" id="IPR018370">
    <property type="entry name" value="Chaperonin_Cpn60_CS"/>
</dbReference>
<dbReference type="InterPro" id="IPR001844">
    <property type="entry name" value="Cpn60/GroEL"/>
</dbReference>
<dbReference type="InterPro" id="IPR002423">
    <property type="entry name" value="Cpn60/GroEL/TCP-1"/>
</dbReference>
<dbReference type="InterPro" id="IPR027409">
    <property type="entry name" value="GroEL-like_apical_dom_sf"/>
</dbReference>
<dbReference type="InterPro" id="IPR027413">
    <property type="entry name" value="GROEL-like_equatorial_sf"/>
</dbReference>
<dbReference type="InterPro" id="IPR027410">
    <property type="entry name" value="TCP-1-like_intermed_sf"/>
</dbReference>
<dbReference type="NCBIfam" id="TIGR02348">
    <property type="entry name" value="GroEL"/>
    <property type="match status" value="1"/>
</dbReference>
<dbReference type="NCBIfam" id="NF000592">
    <property type="entry name" value="PRK00013.1"/>
    <property type="match status" value="1"/>
</dbReference>
<dbReference type="NCBIfam" id="NF009487">
    <property type="entry name" value="PRK12849.1"/>
    <property type="match status" value="1"/>
</dbReference>
<dbReference type="NCBIfam" id="NF009488">
    <property type="entry name" value="PRK12850.1"/>
    <property type="match status" value="1"/>
</dbReference>
<dbReference type="NCBIfam" id="NF009489">
    <property type="entry name" value="PRK12851.1"/>
    <property type="match status" value="1"/>
</dbReference>
<dbReference type="PANTHER" id="PTHR45633">
    <property type="entry name" value="60 KDA HEAT SHOCK PROTEIN, MITOCHONDRIAL"/>
    <property type="match status" value="1"/>
</dbReference>
<dbReference type="Pfam" id="PF00118">
    <property type="entry name" value="Cpn60_TCP1"/>
    <property type="match status" value="1"/>
</dbReference>
<dbReference type="PRINTS" id="PR00298">
    <property type="entry name" value="CHAPERONIN60"/>
</dbReference>
<dbReference type="SUPFAM" id="SSF52029">
    <property type="entry name" value="GroEL apical domain-like"/>
    <property type="match status" value="1"/>
</dbReference>
<dbReference type="SUPFAM" id="SSF48592">
    <property type="entry name" value="GroEL equatorial domain-like"/>
    <property type="match status" value="2"/>
</dbReference>
<dbReference type="PROSITE" id="PS00296">
    <property type="entry name" value="CHAPERONINS_CPN60"/>
    <property type="match status" value="1"/>
</dbReference>
<sequence>MAAKDVKFGNDARVKMLEGVNVLADAVKVTLGPKGRNVVLDKSFGAPTITKDGVSVAREIELEDKFQNMGAQMVKEVASKANDAAGDGTTTATVLAQAIVNEGLKAVAAGMNPMDLKRGIDKAVIAAVEQLKELSVECNDTKAIAQVGTISANSDSSVGNIIAEAMEKVGRDGVITVEEGQALQDELDVVEGMQFDRGYLSPYFINNQEAGSVELENPFILLIDKKVSNIRELLPALEAVAKASRPLLIIAEDVEGEALATLVVNNMRGIVKVAAVKAPGFGDRRKAMLQDIAILTGGIVISEEVGLELEKVALEDLGQAKRVAITKENTTIIDGMGEEAMIQGRVAQIRQQIEDATSDYDKEKLQERVAKLAGGVAVIKVGAATEVEMKEKKDRVEDALHATRAAVEEGVVAGGGVALIRAASKIVDLEGDNEEQNVGIRVALRAMEAPIRQITKNAGDEESVVANNVKAGEGSYGYNAATGEYGDMLEMGILDPTKVTRSALQFAASVAGLMITTEAMVTDLPQKDGAGMPDMGGMGGMGGMGGMM</sequence>
<feature type="chain" id="PRO_1000025848" description="Chaperonin GroEL">
    <location>
        <begin position="1"/>
        <end position="548"/>
    </location>
</feature>
<feature type="binding site" evidence="1">
    <location>
        <begin position="30"/>
        <end position="33"/>
    </location>
    <ligand>
        <name>ATP</name>
        <dbReference type="ChEBI" id="CHEBI:30616"/>
    </ligand>
</feature>
<feature type="binding site" evidence="1">
    <location>
        <position position="51"/>
    </location>
    <ligand>
        <name>ATP</name>
        <dbReference type="ChEBI" id="CHEBI:30616"/>
    </ligand>
</feature>
<feature type="binding site" evidence="1">
    <location>
        <begin position="87"/>
        <end position="91"/>
    </location>
    <ligand>
        <name>ATP</name>
        <dbReference type="ChEBI" id="CHEBI:30616"/>
    </ligand>
</feature>
<feature type="binding site" evidence="1">
    <location>
        <position position="415"/>
    </location>
    <ligand>
        <name>ATP</name>
        <dbReference type="ChEBI" id="CHEBI:30616"/>
    </ligand>
</feature>
<feature type="binding site" evidence="1">
    <location>
        <begin position="479"/>
        <end position="481"/>
    </location>
    <ligand>
        <name>ATP</name>
        <dbReference type="ChEBI" id="CHEBI:30616"/>
    </ligand>
</feature>
<feature type="binding site" evidence="1">
    <location>
        <position position="495"/>
    </location>
    <ligand>
        <name>ATP</name>
        <dbReference type="ChEBI" id="CHEBI:30616"/>
    </ligand>
</feature>
<name>CH60_VIBC1</name>
<reference key="1">
    <citation type="submission" date="2007-08" db="EMBL/GenBank/DDBJ databases">
        <authorList>
            <consortium name="The Vibrio harveyi Genome Sequencing Project"/>
            <person name="Bassler B."/>
            <person name="Clifton S.W."/>
            <person name="Fulton L."/>
            <person name="Delehaunty K."/>
            <person name="Fronick C."/>
            <person name="Harrison M."/>
            <person name="Markivic C."/>
            <person name="Fulton R."/>
            <person name="Tin-Wollam A.-M."/>
            <person name="Shah N."/>
            <person name="Pepin K."/>
            <person name="Nash W."/>
            <person name="Thiruvilangam P."/>
            <person name="Bhonagiri V."/>
            <person name="Waters C."/>
            <person name="Tu K.C."/>
            <person name="Irgon J."/>
            <person name="Wilson R.K."/>
        </authorList>
    </citation>
    <scope>NUCLEOTIDE SEQUENCE [LARGE SCALE GENOMIC DNA]</scope>
    <source>
        <strain>ATCC BAA-1116 / BB120</strain>
    </source>
</reference>
<gene>
    <name evidence="1" type="primary">groEL</name>
    <name evidence="1" type="synonym">groL</name>
    <name type="ordered locus">VIBHAR_00142</name>
</gene>
<keyword id="KW-0067">ATP-binding</keyword>
<keyword id="KW-0143">Chaperone</keyword>
<keyword id="KW-0963">Cytoplasm</keyword>
<keyword id="KW-0413">Isomerase</keyword>
<keyword id="KW-0547">Nucleotide-binding</keyword>